<proteinExistence type="inferred from homology"/>
<gene>
    <name evidence="1" type="primary">nrdR</name>
    <name type="ordered locus">RHA1_ro06790</name>
</gene>
<reference key="1">
    <citation type="journal article" date="2006" name="Proc. Natl. Acad. Sci. U.S.A.">
        <title>The complete genome of Rhodococcus sp. RHA1 provides insights into a catabolic powerhouse.</title>
        <authorList>
            <person name="McLeod M.P."/>
            <person name="Warren R.L."/>
            <person name="Hsiao W.W.L."/>
            <person name="Araki N."/>
            <person name="Myhre M."/>
            <person name="Fernandes C."/>
            <person name="Miyazawa D."/>
            <person name="Wong W."/>
            <person name="Lillquist A.L."/>
            <person name="Wang D."/>
            <person name="Dosanjh M."/>
            <person name="Hara H."/>
            <person name="Petrescu A."/>
            <person name="Morin R.D."/>
            <person name="Yang G."/>
            <person name="Stott J.M."/>
            <person name="Schein J.E."/>
            <person name="Shin H."/>
            <person name="Smailus D."/>
            <person name="Siddiqui A.S."/>
            <person name="Marra M.A."/>
            <person name="Jones S.J.M."/>
            <person name="Holt R."/>
            <person name="Brinkman F.S.L."/>
            <person name="Miyauchi K."/>
            <person name="Fukuda M."/>
            <person name="Davies J.E."/>
            <person name="Mohn W.W."/>
            <person name="Eltis L.D."/>
        </authorList>
    </citation>
    <scope>NUCLEOTIDE SEQUENCE [LARGE SCALE GENOMIC DNA]</scope>
    <source>
        <strain>RHA1</strain>
    </source>
</reference>
<comment type="function">
    <text evidence="1">Negatively regulates transcription of bacterial ribonucleotide reductase nrd genes and operons by binding to NrdR-boxes.</text>
</comment>
<comment type="cofactor">
    <cofactor evidence="1">
        <name>Zn(2+)</name>
        <dbReference type="ChEBI" id="CHEBI:29105"/>
    </cofactor>
    <text evidence="1">Binds 1 zinc ion.</text>
</comment>
<comment type="similarity">
    <text evidence="1">Belongs to the NrdR family.</text>
</comment>
<comment type="sequence caution" evidence="2">
    <conflict type="erroneous initiation">
        <sequence resource="EMBL-CDS" id="ABG98562"/>
    </conflict>
</comment>
<name>NRDR_RHOJR</name>
<accession>Q0S1M4</accession>
<dbReference type="EMBL" id="CP000431">
    <property type="protein sequence ID" value="ABG98562.1"/>
    <property type="status" value="ALT_INIT"/>
    <property type="molecule type" value="Genomic_DNA"/>
</dbReference>
<dbReference type="RefSeq" id="WP_015890458.1">
    <property type="nucleotide sequence ID" value="NC_008268.1"/>
</dbReference>
<dbReference type="SMR" id="Q0S1M4"/>
<dbReference type="GeneID" id="69891125"/>
<dbReference type="KEGG" id="rha:RHA1_ro06790"/>
<dbReference type="eggNOG" id="COG1327">
    <property type="taxonomic scope" value="Bacteria"/>
</dbReference>
<dbReference type="HOGENOM" id="CLU_108412_1_0_11"/>
<dbReference type="OrthoDB" id="9807461at2"/>
<dbReference type="Proteomes" id="UP000008710">
    <property type="component" value="Chromosome"/>
</dbReference>
<dbReference type="GO" id="GO:0005524">
    <property type="term" value="F:ATP binding"/>
    <property type="evidence" value="ECO:0007669"/>
    <property type="project" value="UniProtKB-KW"/>
</dbReference>
<dbReference type="GO" id="GO:0003677">
    <property type="term" value="F:DNA binding"/>
    <property type="evidence" value="ECO:0007669"/>
    <property type="project" value="UniProtKB-KW"/>
</dbReference>
<dbReference type="GO" id="GO:0008270">
    <property type="term" value="F:zinc ion binding"/>
    <property type="evidence" value="ECO:0007669"/>
    <property type="project" value="UniProtKB-UniRule"/>
</dbReference>
<dbReference type="GO" id="GO:0045892">
    <property type="term" value="P:negative regulation of DNA-templated transcription"/>
    <property type="evidence" value="ECO:0007669"/>
    <property type="project" value="UniProtKB-UniRule"/>
</dbReference>
<dbReference type="HAMAP" id="MF_00440">
    <property type="entry name" value="NrdR"/>
    <property type="match status" value="1"/>
</dbReference>
<dbReference type="InterPro" id="IPR005144">
    <property type="entry name" value="ATP-cone_dom"/>
</dbReference>
<dbReference type="InterPro" id="IPR055173">
    <property type="entry name" value="NrdR-like_N"/>
</dbReference>
<dbReference type="InterPro" id="IPR003796">
    <property type="entry name" value="RNR_NrdR-like"/>
</dbReference>
<dbReference type="NCBIfam" id="TIGR00244">
    <property type="entry name" value="transcriptional regulator NrdR"/>
    <property type="match status" value="1"/>
</dbReference>
<dbReference type="PANTHER" id="PTHR30455">
    <property type="entry name" value="TRANSCRIPTIONAL REPRESSOR NRDR"/>
    <property type="match status" value="1"/>
</dbReference>
<dbReference type="PANTHER" id="PTHR30455:SF2">
    <property type="entry name" value="TRANSCRIPTIONAL REPRESSOR NRDR"/>
    <property type="match status" value="1"/>
</dbReference>
<dbReference type="Pfam" id="PF03477">
    <property type="entry name" value="ATP-cone"/>
    <property type="match status" value="1"/>
</dbReference>
<dbReference type="Pfam" id="PF22811">
    <property type="entry name" value="Zn_ribbon_NrdR"/>
    <property type="match status" value="1"/>
</dbReference>
<dbReference type="PROSITE" id="PS51161">
    <property type="entry name" value="ATP_CONE"/>
    <property type="match status" value="1"/>
</dbReference>
<evidence type="ECO:0000255" key="1">
    <source>
        <dbReference type="HAMAP-Rule" id="MF_00440"/>
    </source>
</evidence>
<evidence type="ECO:0000305" key="2"/>
<sequence>MHCPFCRHPDSRVVDSREADEGQAIRRRRSCPECGRRFTTVETAVLSVVKRSGVTEPFSREKVVRGVRRACQGRQVDNDALNLLAQQVEDAVRASGSAEIPSNEVGLAILGPLRDLDEVAYLRFASVYRSFSSAEDFAREIKELREHRESRDDA</sequence>
<feature type="chain" id="PRO_0000264200" description="Transcriptional repressor NrdR">
    <location>
        <begin position="1"/>
        <end position="154"/>
    </location>
</feature>
<feature type="domain" description="ATP-cone" evidence="1">
    <location>
        <begin position="46"/>
        <end position="136"/>
    </location>
</feature>
<feature type="zinc finger region" evidence="1">
    <location>
        <begin position="3"/>
        <end position="34"/>
    </location>
</feature>
<organism>
    <name type="scientific">Rhodococcus jostii (strain RHA1)</name>
    <dbReference type="NCBI Taxonomy" id="101510"/>
    <lineage>
        <taxon>Bacteria</taxon>
        <taxon>Bacillati</taxon>
        <taxon>Actinomycetota</taxon>
        <taxon>Actinomycetes</taxon>
        <taxon>Mycobacteriales</taxon>
        <taxon>Nocardiaceae</taxon>
        <taxon>Rhodococcus</taxon>
    </lineage>
</organism>
<keyword id="KW-0067">ATP-binding</keyword>
<keyword id="KW-0238">DNA-binding</keyword>
<keyword id="KW-0479">Metal-binding</keyword>
<keyword id="KW-0547">Nucleotide-binding</keyword>
<keyword id="KW-0678">Repressor</keyword>
<keyword id="KW-0804">Transcription</keyword>
<keyword id="KW-0805">Transcription regulation</keyword>
<keyword id="KW-0862">Zinc</keyword>
<keyword id="KW-0863">Zinc-finger</keyword>
<protein>
    <recommendedName>
        <fullName evidence="1">Transcriptional repressor NrdR</fullName>
    </recommendedName>
</protein>